<gene>
    <name evidence="1" type="primary">aaeX</name>
    <name type="ordered locus">YPK_0483</name>
</gene>
<proteinExistence type="inferred from homology"/>
<evidence type="ECO:0000255" key="1">
    <source>
        <dbReference type="HAMAP-Rule" id="MF_01546"/>
    </source>
</evidence>
<accession>B1JKI1</accession>
<feature type="chain" id="PRO_1000146769" description="Protein AaeX">
    <location>
        <begin position="1"/>
        <end position="67"/>
    </location>
</feature>
<feature type="transmembrane region" description="Helical" evidence="1">
    <location>
        <begin position="3"/>
        <end position="23"/>
    </location>
</feature>
<feature type="transmembrane region" description="Helical" evidence="1">
    <location>
        <begin position="39"/>
        <end position="59"/>
    </location>
</feature>
<sequence>MSLLPVMVIFGLSFPPIFLELLISLALFFVVRRILQPTGIYEFVWHPALFNTALYCCLFYLTSRLFS</sequence>
<dbReference type="EMBL" id="CP000950">
    <property type="protein sequence ID" value="ACA66786.1"/>
    <property type="molecule type" value="Genomic_DNA"/>
</dbReference>
<dbReference type="RefSeq" id="WP_002210093.1">
    <property type="nucleotide sequence ID" value="NZ_CP009792.1"/>
</dbReference>
<dbReference type="GeneID" id="57975109"/>
<dbReference type="KEGG" id="ypy:YPK_0483"/>
<dbReference type="PATRIC" id="fig|502800.11.peg.1093"/>
<dbReference type="GO" id="GO:0005886">
    <property type="term" value="C:plasma membrane"/>
    <property type="evidence" value="ECO:0007669"/>
    <property type="project" value="UniProtKB-SubCell"/>
</dbReference>
<dbReference type="HAMAP" id="MF_01546">
    <property type="entry name" value="AaeX"/>
    <property type="match status" value="1"/>
</dbReference>
<dbReference type="InterPro" id="IPR012451">
    <property type="entry name" value="DUF1656"/>
</dbReference>
<dbReference type="NCBIfam" id="NF008615">
    <property type="entry name" value="PRK11594.1"/>
    <property type="match status" value="1"/>
</dbReference>
<dbReference type="Pfam" id="PF07869">
    <property type="entry name" value="DUF1656"/>
    <property type="match status" value="1"/>
</dbReference>
<protein>
    <recommendedName>
        <fullName evidence="1">Protein AaeX</fullName>
    </recommendedName>
</protein>
<organism>
    <name type="scientific">Yersinia pseudotuberculosis serotype O:3 (strain YPIII)</name>
    <dbReference type="NCBI Taxonomy" id="502800"/>
    <lineage>
        <taxon>Bacteria</taxon>
        <taxon>Pseudomonadati</taxon>
        <taxon>Pseudomonadota</taxon>
        <taxon>Gammaproteobacteria</taxon>
        <taxon>Enterobacterales</taxon>
        <taxon>Yersiniaceae</taxon>
        <taxon>Yersinia</taxon>
    </lineage>
</organism>
<name>AAEX_YERPY</name>
<reference key="1">
    <citation type="submission" date="2008-02" db="EMBL/GenBank/DDBJ databases">
        <title>Complete sequence of Yersinia pseudotuberculosis YPIII.</title>
        <authorList>
            <consortium name="US DOE Joint Genome Institute"/>
            <person name="Copeland A."/>
            <person name="Lucas S."/>
            <person name="Lapidus A."/>
            <person name="Glavina del Rio T."/>
            <person name="Dalin E."/>
            <person name="Tice H."/>
            <person name="Bruce D."/>
            <person name="Goodwin L."/>
            <person name="Pitluck S."/>
            <person name="Munk A.C."/>
            <person name="Brettin T."/>
            <person name="Detter J.C."/>
            <person name="Han C."/>
            <person name="Tapia R."/>
            <person name="Schmutz J."/>
            <person name="Larimer F."/>
            <person name="Land M."/>
            <person name="Hauser L."/>
            <person name="Challacombe J.F."/>
            <person name="Green L."/>
            <person name="Lindler L.E."/>
            <person name="Nikolich M.P."/>
            <person name="Richardson P."/>
        </authorList>
    </citation>
    <scope>NUCLEOTIDE SEQUENCE [LARGE SCALE GENOMIC DNA]</scope>
    <source>
        <strain>YPIII</strain>
    </source>
</reference>
<comment type="subcellular location">
    <subcellularLocation>
        <location evidence="1">Cell membrane</location>
        <topology evidence="1">Multi-pass membrane protein</topology>
    </subcellularLocation>
</comment>
<comment type="similarity">
    <text evidence="1">Belongs to the AaeX family.</text>
</comment>
<keyword id="KW-1003">Cell membrane</keyword>
<keyword id="KW-0472">Membrane</keyword>
<keyword id="KW-0812">Transmembrane</keyword>
<keyword id="KW-1133">Transmembrane helix</keyword>